<accession>Q0T5V3</accession>
<dbReference type="EMBL" id="CP000266">
    <property type="protein sequence ID" value="ABF03312.1"/>
    <property type="molecule type" value="Genomic_DNA"/>
</dbReference>
<dbReference type="RefSeq" id="WP_000589309.1">
    <property type="nucleotide sequence ID" value="NC_008258.1"/>
</dbReference>
<dbReference type="SMR" id="Q0T5V3"/>
<dbReference type="KEGG" id="sfv:SFV_1102"/>
<dbReference type="HOGENOM" id="CLU_045235_1_0_6"/>
<dbReference type="Proteomes" id="UP000000659">
    <property type="component" value="Chromosome"/>
</dbReference>
<dbReference type="GO" id="GO:0009428">
    <property type="term" value="C:bacterial-type flagellum basal body, distal rod, P ring"/>
    <property type="evidence" value="ECO:0007669"/>
    <property type="project" value="InterPro"/>
</dbReference>
<dbReference type="GO" id="GO:0030288">
    <property type="term" value="C:outer membrane-bounded periplasmic space"/>
    <property type="evidence" value="ECO:0007669"/>
    <property type="project" value="InterPro"/>
</dbReference>
<dbReference type="GO" id="GO:0005198">
    <property type="term" value="F:structural molecule activity"/>
    <property type="evidence" value="ECO:0007669"/>
    <property type="project" value="InterPro"/>
</dbReference>
<dbReference type="GO" id="GO:0071973">
    <property type="term" value="P:bacterial-type flagellum-dependent cell motility"/>
    <property type="evidence" value="ECO:0007669"/>
    <property type="project" value="InterPro"/>
</dbReference>
<dbReference type="HAMAP" id="MF_00416">
    <property type="entry name" value="FlgI"/>
    <property type="match status" value="1"/>
</dbReference>
<dbReference type="InterPro" id="IPR001782">
    <property type="entry name" value="Flag_FlgI"/>
</dbReference>
<dbReference type="NCBIfam" id="NF003676">
    <property type="entry name" value="PRK05303.1"/>
    <property type="match status" value="1"/>
</dbReference>
<dbReference type="PANTHER" id="PTHR30381">
    <property type="entry name" value="FLAGELLAR P-RING PERIPLASMIC PROTEIN FLGI"/>
    <property type="match status" value="1"/>
</dbReference>
<dbReference type="PANTHER" id="PTHR30381:SF0">
    <property type="entry name" value="FLAGELLAR P-RING PROTEIN"/>
    <property type="match status" value="1"/>
</dbReference>
<dbReference type="Pfam" id="PF02119">
    <property type="entry name" value="FlgI"/>
    <property type="match status" value="1"/>
</dbReference>
<dbReference type="PRINTS" id="PR01010">
    <property type="entry name" value="FLGPRINGFLGI"/>
</dbReference>
<gene>
    <name evidence="1" type="primary">flgI</name>
    <name type="ordered locus">SFV_1102</name>
</gene>
<comment type="function">
    <text evidence="1">Assembles around the rod to form the L-ring and probably protects the motor/basal body from shearing forces during rotation.</text>
</comment>
<comment type="subunit">
    <text evidence="1">The basal body constitutes a major portion of the flagellar organelle and consists of four rings (L,P,S, and M) mounted on a central rod.</text>
</comment>
<comment type="subcellular location">
    <subcellularLocation>
        <location evidence="1">Periplasm</location>
    </subcellularLocation>
    <subcellularLocation>
        <location evidence="1">Bacterial flagellum basal body</location>
    </subcellularLocation>
</comment>
<comment type="similarity">
    <text evidence="1">Belongs to the FlgI family.</text>
</comment>
<organism>
    <name type="scientific">Shigella flexneri serotype 5b (strain 8401)</name>
    <dbReference type="NCBI Taxonomy" id="373384"/>
    <lineage>
        <taxon>Bacteria</taxon>
        <taxon>Pseudomonadati</taxon>
        <taxon>Pseudomonadota</taxon>
        <taxon>Gammaproteobacteria</taxon>
        <taxon>Enterobacterales</taxon>
        <taxon>Enterobacteriaceae</taxon>
        <taxon>Shigella</taxon>
    </lineage>
</organism>
<reference key="1">
    <citation type="journal article" date="2006" name="BMC Genomics">
        <title>Complete genome sequence of Shigella flexneri 5b and comparison with Shigella flexneri 2a.</title>
        <authorList>
            <person name="Nie H."/>
            <person name="Yang F."/>
            <person name="Zhang X."/>
            <person name="Yang J."/>
            <person name="Chen L."/>
            <person name="Wang J."/>
            <person name="Xiong Z."/>
            <person name="Peng J."/>
            <person name="Sun L."/>
            <person name="Dong J."/>
            <person name="Xue Y."/>
            <person name="Xu X."/>
            <person name="Chen S."/>
            <person name="Yao Z."/>
            <person name="Shen Y."/>
            <person name="Jin Q."/>
        </authorList>
    </citation>
    <scope>NUCLEOTIDE SEQUENCE [LARGE SCALE GENOMIC DNA]</scope>
    <source>
        <strain>8401</strain>
    </source>
</reference>
<name>FLGI_SHIF8</name>
<protein>
    <recommendedName>
        <fullName evidence="1">Flagellar P-ring protein</fullName>
    </recommendedName>
    <alternativeName>
        <fullName evidence="1">Basal body P-ring protein</fullName>
    </alternativeName>
</protein>
<feature type="signal peptide" evidence="1">
    <location>
        <begin position="1"/>
        <end position="19"/>
    </location>
</feature>
<feature type="chain" id="PRO_1000050119" description="Flagellar P-ring protein">
    <location>
        <begin position="20"/>
        <end position="365"/>
    </location>
</feature>
<keyword id="KW-0975">Bacterial flagellum</keyword>
<keyword id="KW-0574">Periplasm</keyword>
<keyword id="KW-0732">Signal</keyword>
<proteinExistence type="inferred from homology"/>
<evidence type="ECO:0000255" key="1">
    <source>
        <dbReference type="HAMAP-Rule" id="MF_00416"/>
    </source>
</evidence>
<sequence length="365" mass="38121">MIKFLSALILLLVTTAAQAERIRDLTSVQGVRQNSLIGYGLVVGLDGTGDQTTQTPFTTQTLNNMLSQLGITVPTGTNMQLKNVAAVMVTASLPPFGRQGQTIDVVVSSMGNAKSLRGGTLLMTPLKGVDSQVYALAQGNILVGGAGASAGGSSVQVNQLNGGRITNGAVIERELPSQFGVGNTLNLQLNDEDFSMAQQIADTINRVRGYGSATALDARAIQVRVPSGNSSQVRFLADIQNMQVNVTPQDAKVVINSRTGSVVMNREVTLDSCAVAQGNLSVTVNRQANVSQPDTPFGGGQTVVTPQTQIDLRQSGGSLQSVRSSASLNNVVRALNALGATPIDLMSILQSMQSAGCLRAKLEII</sequence>